<feature type="chain" id="PRO_0000358266" description="NAD(P)H-quinone oxidoreductase subunit J, chloroplastic">
    <location>
        <begin position="1"/>
        <end position="158"/>
    </location>
</feature>
<accession>B2XWK7</accession>
<organism>
    <name type="scientific">Fagopyrum esculentum subsp. ancestrale</name>
    <name type="common">Wild buckwheat</name>
    <dbReference type="NCBI Taxonomy" id="180217"/>
    <lineage>
        <taxon>Eukaryota</taxon>
        <taxon>Viridiplantae</taxon>
        <taxon>Streptophyta</taxon>
        <taxon>Embryophyta</taxon>
        <taxon>Tracheophyta</taxon>
        <taxon>Spermatophyta</taxon>
        <taxon>Magnoliopsida</taxon>
        <taxon>eudicotyledons</taxon>
        <taxon>Gunneridae</taxon>
        <taxon>Pentapetalae</taxon>
        <taxon>Caryophyllales</taxon>
        <taxon>Polygonaceae</taxon>
        <taxon>Polygonoideae</taxon>
        <taxon>Fagopyreae</taxon>
        <taxon>Fagopyrum</taxon>
    </lineage>
</organism>
<sequence>MQGRLSAWLVKHGLVHRSLGFDYQGIETLQIKPEDWHSIAVILYVYGYNYLRSQCAYDVEPGGLLASVYHLTRIESGVDQPEEVCIKVFVPRRNPRIPSVFWVWKSVDFQERESYDMLGIFYENHPRLKRILMPESWIGWPLRKDYIAPNFYEIQDAY</sequence>
<reference key="1">
    <citation type="journal article" date="2008" name="BMC Plant Biol.">
        <title>Comparative chloroplast genomics and phylogenetics of Fagopyrum esculentum ssp. ancestrale - a wild ancestor of cultivated buckwheat.</title>
        <authorList>
            <person name="Logacheva M.D."/>
            <person name="Samigullin T.H."/>
            <person name="Dhingra A."/>
            <person name="Penin A.A."/>
        </authorList>
    </citation>
    <scope>NUCLEOTIDE SEQUENCE [LARGE SCALE GENOMIC DNA]</scope>
</reference>
<geneLocation type="chloroplast"/>
<dbReference type="EC" id="7.1.1.-" evidence="1"/>
<dbReference type="EMBL" id="EU254477">
    <property type="protein sequence ID" value="ABY79735.1"/>
    <property type="molecule type" value="Genomic_DNA"/>
</dbReference>
<dbReference type="RefSeq" id="YP_001936520.1">
    <property type="nucleotide sequence ID" value="NC_010776.1"/>
</dbReference>
<dbReference type="SMR" id="B2XWK7"/>
<dbReference type="GeneID" id="6335956"/>
<dbReference type="GO" id="GO:0009535">
    <property type="term" value="C:chloroplast thylakoid membrane"/>
    <property type="evidence" value="ECO:0007669"/>
    <property type="project" value="UniProtKB-SubCell"/>
</dbReference>
<dbReference type="GO" id="GO:0008137">
    <property type="term" value="F:NADH dehydrogenase (ubiquinone) activity"/>
    <property type="evidence" value="ECO:0007669"/>
    <property type="project" value="InterPro"/>
</dbReference>
<dbReference type="GO" id="GO:0048038">
    <property type="term" value="F:quinone binding"/>
    <property type="evidence" value="ECO:0007669"/>
    <property type="project" value="UniProtKB-KW"/>
</dbReference>
<dbReference type="GO" id="GO:0019684">
    <property type="term" value="P:photosynthesis, light reaction"/>
    <property type="evidence" value="ECO:0007669"/>
    <property type="project" value="UniProtKB-UniRule"/>
</dbReference>
<dbReference type="FunFam" id="3.30.460.80:FF:000004">
    <property type="entry name" value="NAD(P)H-quinone oxidoreductase subunit J, chloroplastic"/>
    <property type="match status" value="1"/>
</dbReference>
<dbReference type="Gene3D" id="3.30.460.80">
    <property type="entry name" value="NADH:ubiquinone oxidoreductase, 30kDa subunit"/>
    <property type="match status" value="1"/>
</dbReference>
<dbReference type="HAMAP" id="MF_01357">
    <property type="entry name" value="NDH1_NuoC"/>
    <property type="match status" value="1"/>
</dbReference>
<dbReference type="InterPro" id="IPR010218">
    <property type="entry name" value="NADH_DH_suC"/>
</dbReference>
<dbReference type="InterPro" id="IPR037232">
    <property type="entry name" value="NADH_quin_OxRdtase_su_C/D-like"/>
</dbReference>
<dbReference type="InterPro" id="IPR001268">
    <property type="entry name" value="NADH_UbQ_OxRdtase_30kDa_su"/>
</dbReference>
<dbReference type="InterPro" id="IPR020396">
    <property type="entry name" value="NADH_UbQ_OxRdtase_CS"/>
</dbReference>
<dbReference type="NCBIfam" id="NF009141">
    <property type="entry name" value="PRK12494.1"/>
    <property type="match status" value="1"/>
</dbReference>
<dbReference type="PANTHER" id="PTHR10884:SF14">
    <property type="entry name" value="NADH DEHYDROGENASE [UBIQUINONE] IRON-SULFUR PROTEIN 3, MITOCHONDRIAL"/>
    <property type="match status" value="1"/>
</dbReference>
<dbReference type="PANTHER" id="PTHR10884">
    <property type="entry name" value="NADH DEHYDROGENASE UBIQUINONE IRON-SULFUR PROTEIN 3"/>
    <property type="match status" value="1"/>
</dbReference>
<dbReference type="Pfam" id="PF00329">
    <property type="entry name" value="Complex1_30kDa"/>
    <property type="match status" value="1"/>
</dbReference>
<dbReference type="SUPFAM" id="SSF143243">
    <property type="entry name" value="Nqo5-like"/>
    <property type="match status" value="1"/>
</dbReference>
<dbReference type="PROSITE" id="PS00542">
    <property type="entry name" value="COMPLEX1_30K"/>
    <property type="match status" value="1"/>
</dbReference>
<keyword id="KW-0150">Chloroplast</keyword>
<keyword id="KW-0472">Membrane</keyword>
<keyword id="KW-0520">NAD</keyword>
<keyword id="KW-0521">NADP</keyword>
<keyword id="KW-0934">Plastid</keyword>
<keyword id="KW-0618">Plastoquinone</keyword>
<keyword id="KW-0874">Quinone</keyword>
<keyword id="KW-0793">Thylakoid</keyword>
<keyword id="KW-1278">Translocase</keyword>
<keyword id="KW-0813">Transport</keyword>
<proteinExistence type="inferred from homology"/>
<comment type="function">
    <text evidence="1">NDH shuttles electrons from NAD(P)H:plastoquinone, via FMN and iron-sulfur (Fe-S) centers, to quinones in the photosynthetic chain and possibly in a chloroplast respiratory chain. The immediate electron acceptor for the enzyme in this species is believed to be plastoquinone. Couples the redox reaction to proton translocation, and thus conserves the redox energy in a proton gradient.</text>
</comment>
<comment type="catalytic activity">
    <reaction evidence="1">
        <text>a plastoquinone + NADH + (n+1) H(+)(in) = a plastoquinol + NAD(+) + n H(+)(out)</text>
        <dbReference type="Rhea" id="RHEA:42608"/>
        <dbReference type="Rhea" id="RHEA-COMP:9561"/>
        <dbReference type="Rhea" id="RHEA-COMP:9562"/>
        <dbReference type="ChEBI" id="CHEBI:15378"/>
        <dbReference type="ChEBI" id="CHEBI:17757"/>
        <dbReference type="ChEBI" id="CHEBI:57540"/>
        <dbReference type="ChEBI" id="CHEBI:57945"/>
        <dbReference type="ChEBI" id="CHEBI:62192"/>
    </reaction>
</comment>
<comment type="catalytic activity">
    <reaction evidence="1">
        <text>a plastoquinone + NADPH + (n+1) H(+)(in) = a plastoquinol + NADP(+) + n H(+)(out)</text>
        <dbReference type="Rhea" id="RHEA:42612"/>
        <dbReference type="Rhea" id="RHEA-COMP:9561"/>
        <dbReference type="Rhea" id="RHEA-COMP:9562"/>
        <dbReference type="ChEBI" id="CHEBI:15378"/>
        <dbReference type="ChEBI" id="CHEBI:17757"/>
        <dbReference type="ChEBI" id="CHEBI:57783"/>
        <dbReference type="ChEBI" id="CHEBI:58349"/>
        <dbReference type="ChEBI" id="CHEBI:62192"/>
    </reaction>
</comment>
<comment type="subunit">
    <text evidence="1">NDH is composed of at least 16 different subunits, 5 of which are encoded in the nucleus.</text>
</comment>
<comment type="subcellular location">
    <subcellularLocation>
        <location evidence="1">Plastid</location>
        <location evidence="1">Chloroplast thylakoid membrane</location>
        <topology evidence="1">Peripheral membrane protein</topology>
        <orientation evidence="1">Stromal side</orientation>
    </subcellularLocation>
</comment>
<comment type="similarity">
    <text evidence="1">Belongs to the complex I 30 kDa subunit family.</text>
</comment>
<protein>
    <recommendedName>
        <fullName evidence="1">NAD(P)H-quinone oxidoreductase subunit J, chloroplastic</fullName>
        <ecNumber evidence="1">7.1.1.-</ecNumber>
    </recommendedName>
    <alternativeName>
        <fullName>NAD(P)H dehydrogenase subunit J</fullName>
    </alternativeName>
    <alternativeName>
        <fullName evidence="1">NADH-plastoquinone oxidoreductase subunit J</fullName>
    </alternativeName>
</protein>
<gene>
    <name evidence="1" type="primary">ndhJ</name>
</gene>
<name>NDHJ_FAGEA</name>
<evidence type="ECO:0000255" key="1">
    <source>
        <dbReference type="HAMAP-Rule" id="MF_01357"/>
    </source>
</evidence>